<keyword id="KW-0131">Cell cycle</keyword>
<keyword id="KW-0132">Cell division</keyword>
<keyword id="KW-0143">Chaperone</keyword>
<keyword id="KW-0963">Cytoplasm</keyword>
<keyword id="KW-0413">Isomerase</keyword>
<keyword id="KW-0697">Rotamase</keyword>
<organism>
    <name type="scientific">Escherichia coli O157:H7 (strain EC4115 / EHEC)</name>
    <dbReference type="NCBI Taxonomy" id="444450"/>
    <lineage>
        <taxon>Bacteria</taxon>
        <taxon>Pseudomonadati</taxon>
        <taxon>Pseudomonadota</taxon>
        <taxon>Gammaproteobacteria</taxon>
        <taxon>Enterobacterales</taxon>
        <taxon>Enterobacteriaceae</taxon>
        <taxon>Escherichia</taxon>
    </lineage>
</organism>
<sequence length="432" mass="48193">MQVSVETTQGLGRRVTITIAADSIETAVKSELVNVAKKVRIDGFRKGKVPMNIVAQRYGASVRQDVLGDLMSRNFIDAIIKEKINPAGAPTYVPGEYKLGEDFTYSVEFEVYPEVELQGLEAIEVEKPIVEVTDADVDGMLDTLRKQQATWKEKDGAVEAEDRVTIDFTGSVDGEEFEGGKASDFVLAMGQGRMIPGFEDGIKGHKAGEEFTIDVTFPEEYHAENLKGKAAKFAINLKKVEERELPELTAEFIKRFGVEDGSVEGLRAEVRKNMERELKSAIRNRVKSQAIEGLVKANDIDVPAALIDSEIDVLRRQAAQRFGGNEKQALELPRELFEEQAKRRVVVGLLLGEVIRTNELKADEERVKGLIEEMASAYEDPKEVIEFYSKNKELMDNMRNVALEEQAVEAVLAKAKVTEKETTFNELMNQQA</sequence>
<gene>
    <name evidence="1" type="primary">tig</name>
    <name type="ordered locus">ECH74115_0522</name>
</gene>
<evidence type="ECO:0000255" key="1">
    <source>
        <dbReference type="HAMAP-Rule" id="MF_00303"/>
    </source>
</evidence>
<reference key="1">
    <citation type="journal article" date="2011" name="Proc. Natl. Acad. Sci. U.S.A.">
        <title>Genomic anatomy of Escherichia coli O157:H7 outbreaks.</title>
        <authorList>
            <person name="Eppinger M."/>
            <person name="Mammel M.K."/>
            <person name="Leclerc J.E."/>
            <person name="Ravel J."/>
            <person name="Cebula T.A."/>
        </authorList>
    </citation>
    <scope>NUCLEOTIDE SEQUENCE [LARGE SCALE GENOMIC DNA]</scope>
    <source>
        <strain>EC4115 / EHEC</strain>
    </source>
</reference>
<accession>B5Z3U4</accession>
<comment type="function">
    <text evidence="1">Involved in protein export. Acts as a chaperone by maintaining the newly synthesized protein in an open conformation. Functions as a peptidyl-prolyl cis-trans isomerase.</text>
</comment>
<comment type="catalytic activity">
    <reaction evidence="1">
        <text>[protein]-peptidylproline (omega=180) = [protein]-peptidylproline (omega=0)</text>
        <dbReference type="Rhea" id="RHEA:16237"/>
        <dbReference type="Rhea" id="RHEA-COMP:10747"/>
        <dbReference type="Rhea" id="RHEA-COMP:10748"/>
        <dbReference type="ChEBI" id="CHEBI:83833"/>
        <dbReference type="ChEBI" id="CHEBI:83834"/>
        <dbReference type="EC" id="5.2.1.8"/>
    </reaction>
</comment>
<comment type="subunit">
    <text evidence="1">Homodimer and monomer. In vivo most of the ribosomes are in complex with monomeric TF. Uncomplexed TF, however, is in a monomer-dimer equilibrium with approximately two thirds of TF existing in a dimeric state.</text>
</comment>
<comment type="subcellular location">
    <subcellularLocation>
        <location>Cytoplasm</location>
    </subcellularLocation>
    <text evidence="1">About half TF is bound to the ribosome near the polypeptide exit tunnel while the other half is free in the cytoplasm.</text>
</comment>
<comment type="domain">
    <text evidence="1">Consists of 3 domains; the N-terminus binds the ribosome, the middle domain has PPIase activity, while the C-terminus has intrinsic chaperone activity on its own.</text>
</comment>
<comment type="similarity">
    <text evidence="1">Belongs to the FKBP-type PPIase family. Tig subfamily.</text>
</comment>
<proteinExistence type="inferred from homology"/>
<feature type="chain" id="PRO_1000115530" description="Trigger factor">
    <location>
        <begin position="1"/>
        <end position="432"/>
    </location>
</feature>
<feature type="domain" description="PPIase FKBP-type" evidence="1">
    <location>
        <begin position="161"/>
        <end position="246"/>
    </location>
</feature>
<dbReference type="EC" id="5.2.1.8" evidence="1"/>
<dbReference type="EMBL" id="CP001164">
    <property type="protein sequence ID" value="ACI35949.1"/>
    <property type="molecule type" value="Genomic_DNA"/>
</dbReference>
<dbReference type="RefSeq" id="WP_001198386.1">
    <property type="nucleotide sequence ID" value="NC_011353.1"/>
</dbReference>
<dbReference type="SMR" id="B5Z3U4"/>
<dbReference type="GeneID" id="75202861"/>
<dbReference type="KEGG" id="ecf:ECH74115_0522"/>
<dbReference type="HOGENOM" id="CLU_033058_2_0_6"/>
<dbReference type="GO" id="GO:0005737">
    <property type="term" value="C:cytoplasm"/>
    <property type="evidence" value="ECO:0007669"/>
    <property type="project" value="UniProtKB-SubCell"/>
</dbReference>
<dbReference type="GO" id="GO:0003755">
    <property type="term" value="F:peptidyl-prolyl cis-trans isomerase activity"/>
    <property type="evidence" value="ECO:0007669"/>
    <property type="project" value="UniProtKB-UniRule"/>
</dbReference>
<dbReference type="GO" id="GO:0044183">
    <property type="term" value="F:protein folding chaperone"/>
    <property type="evidence" value="ECO:0007669"/>
    <property type="project" value="TreeGrafter"/>
</dbReference>
<dbReference type="GO" id="GO:0043022">
    <property type="term" value="F:ribosome binding"/>
    <property type="evidence" value="ECO:0007669"/>
    <property type="project" value="TreeGrafter"/>
</dbReference>
<dbReference type="GO" id="GO:0051083">
    <property type="term" value="P:'de novo' cotranslational protein folding"/>
    <property type="evidence" value="ECO:0007669"/>
    <property type="project" value="TreeGrafter"/>
</dbReference>
<dbReference type="GO" id="GO:0051301">
    <property type="term" value="P:cell division"/>
    <property type="evidence" value="ECO:0007669"/>
    <property type="project" value="UniProtKB-KW"/>
</dbReference>
<dbReference type="GO" id="GO:0061077">
    <property type="term" value="P:chaperone-mediated protein folding"/>
    <property type="evidence" value="ECO:0007669"/>
    <property type="project" value="TreeGrafter"/>
</dbReference>
<dbReference type="GO" id="GO:0015031">
    <property type="term" value="P:protein transport"/>
    <property type="evidence" value="ECO:0007669"/>
    <property type="project" value="UniProtKB-UniRule"/>
</dbReference>
<dbReference type="GO" id="GO:0043335">
    <property type="term" value="P:protein unfolding"/>
    <property type="evidence" value="ECO:0007669"/>
    <property type="project" value="TreeGrafter"/>
</dbReference>
<dbReference type="FunFam" id="1.10.3120.10:FF:000001">
    <property type="entry name" value="Trigger factor"/>
    <property type="match status" value="1"/>
</dbReference>
<dbReference type="FunFam" id="3.10.50.40:FF:000001">
    <property type="entry name" value="Trigger factor"/>
    <property type="match status" value="1"/>
</dbReference>
<dbReference type="FunFam" id="3.30.70.1050:FF:000001">
    <property type="entry name" value="Trigger factor"/>
    <property type="match status" value="1"/>
</dbReference>
<dbReference type="Gene3D" id="3.10.50.40">
    <property type="match status" value="1"/>
</dbReference>
<dbReference type="Gene3D" id="3.30.70.1050">
    <property type="entry name" value="Trigger factor ribosome-binding domain"/>
    <property type="match status" value="1"/>
</dbReference>
<dbReference type="Gene3D" id="1.10.3120.10">
    <property type="entry name" value="Trigger factor, C-terminal domain"/>
    <property type="match status" value="1"/>
</dbReference>
<dbReference type="HAMAP" id="MF_00303">
    <property type="entry name" value="Trigger_factor_Tig"/>
    <property type="match status" value="1"/>
</dbReference>
<dbReference type="InterPro" id="IPR046357">
    <property type="entry name" value="PPIase_dom_sf"/>
</dbReference>
<dbReference type="InterPro" id="IPR001179">
    <property type="entry name" value="PPIase_FKBP_dom"/>
</dbReference>
<dbReference type="InterPro" id="IPR005215">
    <property type="entry name" value="Trig_fac"/>
</dbReference>
<dbReference type="InterPro" id="IPR008880">
    <property type="entry name" value="Trigger_fac_C"/>
</dbReference>
<dbReference type="InterPro" id="IPR037041">
    <property type="entry name" value="Trigger_fac_C_sf"/>
</dbReference>
<dbReference type="InterPro" id="IPR008881">
    <property type="entry name" value="Trigger_fac_ribosome-bd_bac"/>
</dbReference>
<dbReference type="InterPro" id="IPR036611">
    <property type="entry name" value="Trigger_fac_ribosome-bd_sf"/>
</dbReference>
<dbReference type="InterPro" id="IPR027304">
    <property type="entry name" value="Trigger_fact/SurA_dom_sf"/>
</dbReference>
<dbReference type="NCBIfam" id="TIGR00115">
    <property type="entry name" value="tig"/>
    <property type="match status" value="1"/>
</dbReference>
<dbReference type="PANTHER" id="PTHR30560">
    <property type="entry name" value="TRIGGER FACTOR CHAPERONE AND PEPTIDYL-PROLYL CIS/TRANS ISOMERASE"/>
    <property type="match status" value="1"/>
</dbReference>
<dbReference type="PANTHER" id="PTHR30560:SF3">
    <property type="entry name" value="TRIGGER FACTOR-LIKE PROTEIN TIG, CHLOROPLASTIC"/>
    <property type="match status" value="1"/>
</dbReference>
<dbReference type="Pfam" id="PF00254">
    <property type="entry name" value="FKBP_C"/>
    <property type="match status" value="1"/>
</dbReference>
<dbReference type="Pfam" id="PF05698">
    <property type="entry name" value="Trigger_C"/>
    <property type="match status" value="1"/>
</dbReference>
<dbReference type="Pfam" id="PF05697">
    <property type="entry name" value="Trigger_N"/>
    <property type="match status" value="1"/>
</dbReference>
<dbReference type="PIRSF" id="PIRSF003095">
    <property type="entry name" value="Trigger_factor"/>
    <property type="match status" value="1"/>
</dbReference>
<dbReference type="SUPFAM" id="SSF54534">
    <property type="entry name" value="FKBP-like"/>
    <property type="match status" value="1"/>
</dbReference>
<dbReference type="SUPFAM" id="SSF109998">
    <property type="entry name" value="Triger factor/SurA peptide-binding domain-like"/>
    <property type="match status" value="1"/>
</dbReference>
<dbReference type="SUPFAM" id="SSF102735">
    <property type="entry name" value="Trigger factor ribosome-binding domain"/>
    <property type="match status" value="1"/>
</dbReference>
<dbReference type="PROSITE" id="PS50059">
    <property type="entry name" value="FKBP_PPIASE"/>
    <property type="match status" value="1"/>
</dbReference>
<name>TIG_ECO5E</name>
<protein>
    <recommendedName>
        <fullName evidence="1">Trigger factor</fullName>
        <shortName evidence="1">TF</shortName>
        <ecNumber evidence="1">5.2.1.8</ecNumber>
    </recommendedName>
    <alternativeName>
        <fullName evidence="1">PPIase</fullName>
    </alternativeName>
</protein>